<sequence>MAGELIKEAESNMKKTIEVVKKEFASLRAGRATPALLDKVMVNYYGTPTPVNQLANISVPEARLLVVQPWDKTVLPEIERAILKSDLGITPASDGNVIRLAIPQLTQERRAELMKVIKKKAEEGRVAIRNIRRDTNEQLKSQQKDGKMSEDELKRSQDEVQKLTDRYIKEIDSLLSTKEQEIMQV</sequence>
<feature type="chain" id="PRO_1000074589" description="Ribosome-recycling factor">
    <location>
        <begin position="1"/>
        <end position="185"/>
    </location>
</feature>
<feature type="region of interest" description="Disordered" evidence="2">
    <location>
        <begin position="136"/>
        <end position="159"/>
    </location>
</feature>
<dbReference type="EMBL" id="AP009389">
    <property type="protein sequence ID" value="BAF59436.1"/>
    <property type="molecule type" value="Genomic_DNA"/>
</dbReference>
<dbReference type="SMR" id="A5D2T8"/>
<dbReference type="STRING" id="370438.PTH_1255"/>
<dbReference type="KEGG" id="pth:PTH_1255"/>
<dbReference type="eggNOG" id="COG0233">
    <property type="taxonomic scope" value="Bacteria"/>
</dbReference>
<dbReference type="HOGENOM" id="CLU_073981_2_0_9"/>
<dbReference type="Proteomes" id="UP000006556">
    <property type="component" value="Chromosome"/>
</dbReference>
<dbReference type="GO" id="GO:0005737">
    <property type="term" value="C:cytoplasm"/>
    <property type="evidence" value="ECO:0007669"/>
    <property type="project" value="UniProtKB-SubCell"/>
</dbReference>
<dbReference type="GO" id="GO:0043023">
    <property type="term" value="F:ribosomal large subunit binding"/>
    <property type="evidence" value="ECO:0007669"/>
    <property type="project" value="TreeGrafter"/>
</dbReference>
<dbReference type="GO" id="GO:0006415">
    <property type="term" value="P:translational termination"/>
    <property type="evidence" value="ECO:0007669"/>
    <property type="project" value="UniProtKB-UniRule"/>
</dbReference>
<dbReference type="CDD" id="cd00520">
    <property type="entry name" value="RRF"/>
    <property type="match status" value="1"/>
</dbReference>
<dbReference type="FunFam" id="1.10.132.20:FF:000001">
    <property type="entry name" value="Ribosome-recycling factor"/>
    <property type="match status" value="1"/>
</dbReference>
<dbReference type="FunFam" id="3.30.1360.40:FF:000001">
    <property type="entry name" value="Ribosome-recycling factor"/>
    <property type="match status" value="1"/>
</dbReference>
<dbReference type="Gene3D" id="3.30.1360.40">
    <property type="match status" value="1"/>
</dbReference>
<dbReference type="Gene3D" id="1.10.132.20">
    <property type="entry name" value="Ribosome-recycling factor"/>
    <property type="match status" value="1"/>
</dbReference>
<dbReference type="HAMAP" id="MF_00040">
    <property type="entry name" value="RRF"/>
    <property type="match status" value="1"/>
</dbReference>
<dbReference type="InterPro" id="IPR002661">
    <property type="entry name" value="Ribosome_recyc_fac"/>
</dbReference>
<dbReference type="InterPro" id="IPR023584">
    <property type="entry name" value="Ribosome_recyc_fac_dom"/>
</dbReference>
<dbReference type="InterPro" id="IPR036191">
    <property type="entry name" value="RRF_sf"/>
</dbReference>
<dbReference type="NCBIfam" id="TIGR00496">
    <property type="entry name" value="frr"/>
    <property type="match status" value="1"/>
</dbReference>
<dbReference type="PANTHER" id="PTHR20982:SF3">
    <property type="entry name" value="MITOCHONDRIAL RIBOSOME RECYCLING FACTOR PSEUDO 1"/>
    <property type="match status" value="1"/>
</dbReference>
<dbReference type="PANTHER" id="PTHR20982">
    <property type="entry name" value="RIBOSOME RECYCLING FACTOR"/>
    <property type="match status" value="1"/>
</dbReference>
<dbReference type="Pfam" id="PF01765">
    <property type="entry name" value="RRF"/>
    <property type="match status" value="1"/>
</dbReference>
<dbReference type="SUPFAM" id="SSF55194">
    <property type="entry name" value="Ribosome recycling factor, RRF"/>
    <property type="match status" value="1"/>
</dbReference>
<organism>
    <name type="scientific">Pelotomaculum thermopropionicum (strain DSM 13744 / JCM 10971 / SI)</name>
    <dbReference type="NCBI Taxonomy" id="370438"/>
    <lineage>
        <taxon>Bacteria</taxon>
        <taxon>Bacillati</taxon>
        <taxon>Bacillota</taxon>
        <taxon>Clostridia</taxon>
        <taxon>Eubacteriales</taxon>
        <taxon>Desulfotomaculaceae</taxon>
        <taxon>Pelotomaculum</taxon>
    </lineage>
</organism>
<evidence type="ECO:0000255" key="1">
    <source>
        <dbReference type="HAMAP-Rule" id="MF_00040"/>
    </source>
</evidence>
<evidence type="ECO:0000256" key="2">
    <source>
        <dbReference type="SAM" id="MobiDB-lite"/>
    </source>
</evidence>
<gene>
    <name evidence="1" type="primary">frr</name>
    <name type="ordered locus">PTH_1255</name>
</gene>
<comment type="function">
    <text evidence="1">Responsible for the release of ribosomes from messenger RNA at the termination of protein biosynthesis. May increase the efficiency of translation by recycling ribosomes from one round of translation to another.</text>
</comment>
<comment type="subcellular location">
    <subcellularLocation>
        <location evidence="1">Cytoplasm</location>
    </subcellularLocation>
</comment>
<comment type="similarity">
    <text evidence="1">Belongs to the RRF family.</text>
</comment>
<proteinExistence type="inferred from homology"/>
<reference key="1">
    <citation type="journal article" date="2008" name="Genome Res.">
        <title>The genome of Pelotomaculum thermopropionicum reveals niche-associated evolution in anaerobic microbiota.</title>
        <authorList>
            <person name="Kosaka T."/>
            <person name="Kato S."/>
            <person name="Shimoyama T."/>
            <person name="Ishii S."/>
            <person name="Abe T."/>
            <person name="Watanabe K."/>
        </authorList>
    </citation>
    <scope>NUCLEOTIDE SEQUENCE [LARGE SCALE GENOMIC DNA]</scope>
    <source>
        <strain>DSM 13744 / JCM 10971 / SI</strain>
    </source>
</reference>
<protein>
    <recommendedName>
        <fullName evidence="1">Ribosome-recycling factor</fullName>
        <shortName evidence="1">RRF</shortName>
    </recommendedName>
    <alternativeName>
        <fullName evidence="1">Ribosome-releasing factor</fullName>
    </alternativeName>
</protein>
<name>RRF_PELTS</name>
<keyword id="KW-0963">Cytoplasm</keyword>
<keyword id="KW-0648">Protein biosynthesis</keyword>
<keyword id="KW-1185">Reference proteome</keyword>
<accession>A5D2T8</accession>